<gene>
    <name type="primary">nfyB</name>
    <name type="ORF">DDB_G0279419</name>
</gene>
<organism>
    <name type="scientific">Dictyostelium discoideum</name>
    <name type="common">Social amoeba</name>
    <dbReference type="NCBI Taxonomy" id="44689"/>
    <lineage>
        <taxon>Eukaryota</taxon>
        <taxon>Amoebozoa</taxon>
        <taxon>Evosea</taxon>
        <taxon>Eumycetozoa</taxon>
        <taxon>Dictyostelia</taxon>
        <taxon>Dictyosteliales</taxon>
        <taxon>Dictyosteliaceae</taxon>
        <taxon>Dictyostelium</taxon>
    </lineage>
</organism>
<accession>Q54WV0</accession>
<proteinExistence type="inferred from homology"/>
<sequence length="490" mass="56677">MSGNEDFIYDDNSSSSISNQTDGGGGGGSSNNNSGGNANNNNNEGDREQDRYLPIANIIRIMKKALPNNAKVAKDAKETVQDCVSEFISFITSEASDKCQQEKRKTINGEDIIAAMVSLGFENYVEPLKVYLLKYRETEKNSNNKRSPKKSESSSPPESPPLAHLDNSINSGYQPPPPPQQQQQQPPQVQQQQQQQQQQQQQQLQQQQQLQQHQQQQLQPQQQQQHLQQHLQQQQPQQQQQPPQQQQQQLTTTTTTTSTNNQQYQQQPQQQQQQQQQQQQQQQQQQQQQQQQQQQQQQQQQQQQQVQPPYILQQHNIQQPNVFLNQQAQQQQQQQQQQQQPMMNIQSHQQQFPQQHQIQQHLQQQHQHLQQIHNMQPPHQQMQFNQQFQMSQQIQMPQQFSNNNNNNNNNNNNNNNNNNNNNSNNNNNNNNNNNNNNNNPNNNINNNLNNSSNSLHNSGNSLHNSGNSGQIPPLYQQPYISTNPEYPSTS</sequence>
<comment type="function">
    <text evidence="1">Component of the NF-Y/HAP transcription factor complex. The NF-Y complex stimulates the transcription of various genes by recognizing and binding to a CCAAT motif in promoters (By similarity).</text>
</comment>
<comment type="subunit">
    <text evidence="1">Heterotrimeric transcription factor composed of three components, nfyA, nfyB and nfyC. nfyB and nfyC must interact and dimerize for nfyA association and DNA binding (By similarity).</text>
</comment>
<comment type="subcellular location">
    <subcellularLocation>
        <location evidence="1">Nucleus</location>
    </subcellularLocation>
</comment>
<comment type="similarity">
    <text evidence="4">Belongs to the NFYB/HAP3 subunit family.</text>
</comment>
<keyword id="KW-0010">Activator</keyword>
<keyword id="KW-0175">Coiled coil</keyword>
<keyword id="KW-0238">DNA-binding</keyword>
<keyword id="KW-0539">Nucleus</keyword>
<keyword id="KW-1185">Reference proteome</keyword>
<keyword id="KW-0804">Transcription</keyword>
<keyword id="KW-0805">Transcription regulation</keyword>
<protein>
    <recommendedName>
        <fullName>Nuclear transcription factor Y subunit beta</fullName>
    </recommendedName>
    <alternativeName>
        <fullName>CAAT box DNA-binding protein subunit B</fullName>
    </alternativeName>
    <alternativeName>
        <fullName>Nuclear transcription factor Y subunit B</fullName>
        <shortName>NF-YB</shortName>
    </alternativeName>
</protein>
<reference key="1">
    <citation type="journal article" date="2005" name="Nature">
        <title>The genome of the social amoeba Dictyostelium discoideum.</title>
        <authorList>
            <person name="Eichinger L."/>
            <person name="Pachebat J.A."/>
            <person name="Gloeckner G."/>
            <person name="Rajandream M.A."/>
            <person name="Sucgang R."/>
            <person name="Berriman M."/>
            <person name="Song J."/>
            <person name="Olsen R."/>
            <person name="Szafranski K."/>
            <person name="Xu Q."/>
            <person name="Tunggal B."/>
            <person name="Kummerfeld S."/>
            <person name="Madera M."/>
            <person name="Konfortov B.A."/>
            <person name="Rivero F."/>
            <person name="Bankier A.T."/>
            <person name="Lehmann R."/>
            <person name="Hamlin N."/>
            <person name="Davies R."/>
            <person name="Gaudet P."/>
            <person name="Fey P."/>
            <person name="Pilcher K."/>
            <person name="Chen G."/>
            <person name="Saunders D."/>
            <person name="Sodergren E.J."/>
            <person name="Davis P."/>
            <person name="Kerhornou A."/>
            <person name="Nie X."/>
            <person name="Hall N."/>
            <person name="Anjard C."/>
            <person name="Hemphill L."/>
            <person name="Bason N."/>
            <person name="Farbrother P."/>
            <person name="Desany B."/>
            <person name="Just E."/>
            <person name="Morio T."/>
            <person name="Rost R."/>
            <person name="Churcher C.M."/>
            <person name="Cooper J."/>
            <person name="Haydock S."/>
            <person name="van Driessche N."/>
            <person name="Cronin A."/>
            <person name="Goodhead I."/>
            <person name="Muzny D.M."/>
            <person name="Mourier T."/>
            <person name="Pain A."/>
            <person name="Lu M."/>
            <person name="Harper D."/>
            <person name="Lindsay R."/>
            <person name="Hauser H."/>
            <person name="James K.D."/>
            <person name="Quiles M."/>
            <person name="Madan Babu M."/>
            <person name="Saito T."/>
            <person name="Buchrieser C."/>
            <person name="Wardroper A."/>
            <person name="Felder M."/>
            <person name="Thangavelu M."/>
            <person name="Johnson D."/>
            <person name="Knights A."/>
            <person name="Loulseged H."/>
            <person name="Mungall K.L."/>
            <person name="Oliver K."/>
            <person name="Price C."/>
            <person name="Quail M.A."/>
            <person name="Urushihara H."/>
            <person name="Hernandez J."/>
            <person name="Rabbinowitsch E."/>
            <person name="Steffen D."/>
            <person name="Sanders M."/>
            <person name="Ma J."/>
            <person name="Kohara Y."/>
            <person name="Sharp S."/>
            <person name="Simmonds M.N."/>
            <person name="Spiegler S."/>
            <person name="Tivey A."/>
            <person name="Sugano S."/>
            <person name="White B."/>
            <person name="Walker D."/>
            <person name="Woodward J.R."/>
            <person name="Winckler T."/>
            <person name="Tanaka Y."/>
            <person name="Shaulsky G."/>
            <person name="Schleicher M."/>
            <person name="Weinstock G.M."/>
            <person name="Rosenthal A."/>
            <person name="Cox E.C."/>
            <person name="Chisholm R.L."/>
            <person name="Gibbs R.A."/>
            <person name="Loomis W.F."/>
            <person name="Platzer M."/>
            <person name="Kay R.R."/>
            <person name="Williams J.G."/>
            <person name="Dear P.H."/>
            <person name="Noegel A.A."/>
            <person name="Barrell B.G."/>
            <person name="Kuspa A."/>
        </authorList>
    </citation>
    <scope>NUCLEOTIDE SEQUENCE [LARGE SCALE GENOMIC DNA]</scope>
    <source>
        <strain>AX4</strain>
    </source>
</reference>
<evidence type="ECO:0000250" key="1"/>
<evidence type="ECO:0000255" key="2"/>
<evidence type="ECO:0000256" key="3">
    <source>
        <dbReference type="SAM" id="MobiDB-lite"/>
    </source>
</evidence>
<evidence type="ECO:0000305" key="4"/>
<feature type="chain" id="PRO_0000371333" description="Nuclear transcription factor Y subunit beta">
    <location>
        <begin position="1"/>
        <end position="490"/>
    </location>
</feature>
<feature type="DNA-binding region" evidence="1">
    <location>
        <begin position="53"/>
        <end position="59"/>
    </location>
</feature>
<feature type="region of interest" description="Disordered" evidence="3">
    <location>
        <begin position="1"/>
        <end position="48"/>
    </location>
</feature>
<feature type="region of interest" description="Subunit association domain (SAD)" evidence="1">
    <location>
        <begin position="80"/>
        <end position="91"/>
    </location>
</feature>
<feature type="region of interest" description="Disordered" evidence="3">
    <location>
        <begin position="139"/>
        <end position="195"/>
    </location>
</feature>
<feature type="region of interest" description="Disordered" evidence="3">
    <location>
        <begin position="221"/>
        <end position="264"/>
    </location>
</feature>
<feature type="region of interest" description="Disordered" evidence="3">
    <location>
        <begin position="325"/>
        <end position="370"/>
    </location>
</feature>
<feature type="region of interest" description="Disordered" evidence="3">
    <location>
        <begin position="399"/>
        <end position="490"/>
    </location>
</feature>
<feature type="coiled-coil region" evidence="2">
    <location>
        <begin position="188"/>
        <end position="219"/>
    </location>
</feature>
<feature type="coiled-coil region" evidence="2">
    <location>
        <begin position="269"/>
        <end position="307"/>
    </location>
</feature>
<feature type="compositionally biased region" description="Low complexity" evidence="3">
    <location>
        <begin position="30"/>
        <end position="43"/>
    </location>
</feature>
<feature type="compositionally biased region" description="Low complexity" evidence="3">
    <location>
        <begin position="181"/>
        <end position="195"/>
    </location>
</feature>
<feature type="compositionally biased region" description="Low complexity" evidence="3">
    <location>
        <begin position="399"/>
        <end position="468"/>
    </location>
</feature>
<feature type="compositionally biased region" description="Polar residues" evidence="3">
    <location>
        <begin position="478"/>
        <end position="490"/>
    </location>
</feature>
<name>NFYB_DICDI</name>
<dbReference type="EMBL" id="AAFI02000031">
    <property type="protein sequence ID" value="EAL67648.1"/>
    <property type="molecule type" value="Genomic_DNA"/>
</dbReference>
<dbReference type="RefSeq" id="XP_641617.1">
    <property type="nucleotide sequence ID" value="XM_636525.1"/>
</dbReference>
<dbReference type="SMR" id="Q54WV0"/>
<dbReference type="FunCoup" id="Q54WV0">
    <property type="interactions" value="38"/>
</dbReference>
<dbReference type="STRING" id="44689.Q54WV0"/>
<dbReference type="PaxDb" id="44689-DDB0220099"/>
<dbReference type="EnsemblProtists" id="EAL67648">
    <property type="protein sequence ID" value="EAL67648"/>
    <property type="gene ID" value="DDB_G0279419"/>
</dbReference>
<dbReference type="GeneID" id="8622023"/>
<dbReference type="KEGG" id="ddi:DDB_G0279419"/>
<dbReference type="dictyBase" id="DDB_G0279419">
    <property type="gene designation" value="nfyB"/>
</dbReference>
<dbReference type="VEuPathDB" id="AmoebaDB:DDB_G0279419"/>
<dbReference type="eggNOG" id="KOG0869">
    <property type="taxonomic scope" value="Eukaryota"/>
</dbReference>
<dbReference type="HOGENOM" id="CLU_557158_0_0_1"/>
<dbReference type="InParanoid" id="Q54WV0"/>
<dbReference type="OMA" id="CACIICT"/>
<dbReference type="PRO" id="PR:Q54WV0"/>
<dbReference type="Proteomes" id="UP000002195">
    <property type="component" value="Chromosome 3"/>
</dbReference>
<dbReference type="GO" id="GO:0016602">
    <property type="term" value="C:CCAAT-binding factor complex"/>
    <property type="evidence" value="ECO:0000250"/>
    <property type="project" value="dictyBase"/>
</dbReference>
<dbReference type="GO" id="GO:0003677">
    <property type="term" value="F:DNA binding"/>
    <property type="evidence" value="ECO:0000250"/>
    <property type="project" value="dictyBase"/>
</dbReference>
<dbReference type="GO" id="GO:0001228">
    <property type="term" value="F:DNA-binding transcription activator activity, RNA polymerase II-specific"/>
    <property type="evidence" value="ECO:0007669"/>
    <property type="project" value="InterPro"/>
</dbReference>
<dbReference type="GO" id="GO:0000981">
    <property type="term" value="F:DNA-binding transcription factor activity, RNA polymerase II-specific"/>
    <property type="evidence" value="ECO:0000318"/>
    <property type="project" value="GO_Central"/>
</dbReference>
<dbReference type="GO" id="GO:0046982">
    <property type="term" value="F:protein heterodimerization activity"/>
    <property type="evidence" value="ECO:0007669"/>
    <property type="project" value="InterPro"/>
</dbReference>
<dbReference type="GO" id="GO:0043565">
    <property type="term" value="F:sequence-specific DNA binding"/>
    <property type="evidence" value="ECO:0007669"/>
    <property type="project" value="InterPro"/>
</dbReference>
<dbReference type="GO" id="GO:0006355">
    <property type="term" value="P:regulation of DNA-templated transcription"/>
    <property type="evidence" value="ECO:0000250"/>
    <property type="project" value="dictyBase"/>
</dbReference>
<dbReference type="GO" id="GO:0006357">
    <property type="term" value="P:regulation of transcription by RNA polymerase II"/>
    <property type="evidence" value="ECO:0000318"/>
    <property type="project" value="GO_Central"/>
</dbReference>
<dbReference type="CDD" id="cd22907">
    <property type="entry name" value="HFD_NFYB"/>
    <property type="match status" value="1"/>
</dbReference>
<dbReference type="FunFam" id="1.10.20.10:FF:000110">
    <property type="entry name" value="Nuclear factor Y, subunit B1"/>
    <property type="match status" value="1"/>
</dbReference>
<dbReference type="Gene3D" id="1.10.20.10">
    <property type="entry name" value="Histone, subunit A"/>
    <property type="match status" value="1"/>
</dbReference>
<dbReference type="InterPro" id="IPR003958">
    <property type="entry name" value="CBFA_NFYB_domain"/>
</dbReference>
<dbReference type="InterPro" id="IPR009072">
    <property type="entry name" value="Histone-fold"/>
</dbReference>
<dbReference type="InterPro" id="IPR027113">
    <property type="entry name" value="Transc_fact_NFYB/HAP3"/>
</dbReference>
<dbReference type="InterPro" id="IPR003956">
    <property type="entry name" value="Transcrpt_fac_NFYB/HAP3_CS"/>
</dbReference>
<dbReference type="PANTHER" id="PTHR11064">
    <property type="entry name" value="CCAAT-BINDING TRANSCRIPTION FACTOR-RELATED"/>
    <property type="match status" value="1"/>
</dbReference>
<dbReference type="PANTHER" id="PTHR11064:SF9">
    <property type="entry name" value="NUCLEAR TRANSCRIPTION FACTOR Y SUBUNIT BETA"/>
    <property type="match status" value="1"/>
</dbReference>
<dbReference type="Pfam" id="PF00808">
    <property type="entry name" value="CBFD_NFYB_HMF"/>
    <property type="match status" value="1"/>
</dbReference>
<dbReference type="PRINTS" id="PR00615">
    <property type="entry name" value="CCAATSUBUNTA"/>
</dbReference>
<dbReference type="SUPFAM" id="SSF47113">
    <property type="entry name" value="Histone-fold"/>
    <property type="match status" value="1"/>
</dbReference>
<dbReference type="PROSITE" id="PS00685">
    <property type="entry name" value="NFYB_HAP3"/>
    <property type="match status" value="1"/>
</dbReference>